<comment type="function">
    <text evidence="1">Endonuclease that specifically degrades the RNA of RNA-DNA hybrids.</text>
</comment>
<comment type="catalytic activity">
    <reaction evidence="1">
        <text>Endonucleolytic cleavage to 5'-phosphomonoester.</text>
        <dbReference type="EC" id="3.1.26.4"/>
    </reaction>
</comment>
<comment type="cofactor">
    <cofactor evidence="1">
        <name>Mn(2+)</name>
        <dbReference type="ChEBI" id="CHEBI:29035"/>
    </cofactor>
    <cofactor evidence="1">
        <name>Mg(2+)</name>
        <dbReference type="ChEBI" id="CHEBI:18420"/>
    </cofactor>
    <text evidence="1">Manganese or magnesium. Binds 1 divalent metal ion per monomer in the absence of substrate. May bind a second metal ion after substrate binding.</text>
</comment>
<comment type="subcellular location">
    <subcellularLocation>
        <location evidence="1">Cytoplasm</location>
    </subcellularLocation>
</comment>
<comment type="similarity">
    <text evidence="1">Belongs to the RNase HII family.</text>
</comment>
<gene>
    <name evidence="1" type="primary">rnhB</name>
    <name type="ordered locus">SDY_0199</name>
</gene>
<name>RNH2_SHIDS</name>
<proteinExistence type="inferred from homology"/>
<organism>
    <name type="scientific">Shigella dysenteriae serotype 1 (strain Sd197)</name>
    <dbReference type="NCBI Taxonomy" id="300267"/>
    <lineage>
        <taxon>Bacteria</taxon>
        <taxon>Pseudomonadati</taxon>
        <taxon>Pseudomonadota</taxon>
        <taxon>Gammaproteobacteria</taxon>
        <taxon>Enterobacterales</taxon>
        <taxon>Enterobacteriaceae</taxon>
        <taxon>Shigella</taxon>
    </lineage>
</organism>
<protein>
    <recommendedName>
        <fullName evidence="1">Ribonuclease HII</fullName>
        <shortName evidence="1">RNase HII</shortName>
        <ecNumber evidence="1">3.1.26.4</ecNumber>
    </recommendedName>
</protein>
<sequence length="198" mass="21552">MIEFVYPHTQLVAGVDEVGRGPLVGAVVTAAVILDPARPIAGLNDSKKLSEKRRLALYEEIKEKALSWSLGRAEPHEIDELNILHATMLAMQRAVAGLHIAPEYVLIDGNRCPKLPMPAMAVVKGDSRVPEISAASILAKVTRDAEMAALDIVFPQYGFAQHKGYPTAFHLEKLAEYGATEHHRRSFGPVKRALGLAS</sequence>
<evidence type="ECO:0000255" key="1">
    <source>
        <dbReference type="HAMAP-Rule" id="MF_00052"/>
    </source>
</evidence>
<evidence type="ECO:0000255" key="2">
    <source>
        <dbReference type="PROSITE-ProRule" id="PRU01319"/>
    </source>
</evidence>
<dbReference type="EC" id="3.1.26.4" evidence="1"/>
<dbReference type="EMBL" id="CP000034">
    <property type="protein sequence ID" value="ABB60431.1"/>
    <property type="molecule type" value="Genomic_DNA"/>
</dbReference>
<dbReference type="RefSeq" id="WP_000569431.1">
    <property type="nucleotide sequence ID" value="NC_007606.1"/>
</dbReference>
<dbReference type="RefSeq" id="YP_401920.1">
    <property type="nucleotide sequence ID" value="NC_007606.1"/>
</dbReference>
<dbReference type="SMR" id="Q32JS6"/>
<dbReference type="STRING" id="300267.SDY_0199"/>
<dbReference type="EnsemblBacteria" id="ABB60431">
    <property type="protein sequence ID" value="ABB60431"/>
    <property type="gene ID" value="SDY_0199"/>
</dbReference>
<dbReference type="KEGG" id="sdy:SDY_0199"/>
<dbReference type="PATRIC" id="fig|300267.13.peg.230"/>
<dbReference type="HOGENOM" id="CLU_036532_3_2_6"/>
<dbReference type="Proteomes" id="UP000002716">
    <property type="component" value="Chromosome"/>
</dbReference>
<dbReference type="GO" id="GO:0005737">
    <property type="term" value="C:cytoplasm"/>
    <property type="evidence" value="ECO:0007669"/>
    <property type="project" value="UniProtKB-SubCell"/>
</dbReference>
<dbReference type="GO" id="GO:0032299">
    <property type="term" value="C:ribonuclease H2 complex"/>
    <property type="evidence" value="ECO:0007669"/>
    <property type="project" value="TreeGrafter"/>
</dbReference>
<dbReference type="GO" id="GO:0030145">
    <property type="term" value="F:manganese ion binding"/>
    <property type="evidence" value="ECO:0007669"/>
    <property type="project" value="UniProtKB-UniRule"/>
</dbReference>
<dbReference type="GO" id="GO:0003723">
    <property type="term" value="F:RNA binding"/>
    <property type="evidence" value="ECO:0007669"/>
    <property type="project" value="InterPro"/>
</dbReference>
<dbReference type="GO" id="GO:0004523">
    <property type="term" value="F:RNA-DNA hybrid ribonuclease activity"/>
    <property type="evidence" value="ECO:0007669"/>
    <property type="project" value="UniProtKB-UniRule"/>
</dbReference>
<dbReference type="GO" id="GO:0043137">
    <property type="term" value="P:DNA replication, removal of RNA primer"/>
    <property type="evidence" value="ECO:0007669"/>
    <property type="project" value="TreeGrafter"/>
</dbReference>
<dbReference type="GO" id="GO:0006298">
    <property type="term" value="P:mismatch repair"/>
    <property type="evidence" value="ECO:0007669"/>
    <property type="project" value="TreeGrafter"/>
</dbReference>
<dbReference type="CDD" id="cd07182">
    <property type="entry name" value="RNase_HII_bacteria_HII_like"/>
    <property type="match status" value="1"/>
</dbReference>
<dbReference type="FunFam" id="3.30.420.10:FF:000006">
    <property type="entry name" value="Ribonuclease HII"/>
    <property type="match status" value="1"/>
</dbReference>
<dbReference type="Gene3D" id="3.30.420.10">
    <property type="entry name" value="Ribonuclease H-like superfamily/Ribonuclease H"/>
    <property type="match status" value="1"/>
</dbReference>
<dbReference type="HAMAP" id="MF_00052_B">
    <property type="entry name" value="RNase_HII_B"/>
    <property type="match status" value="1"/>
</dbReference>
<dbReference type="InterPro" id="IPR022898">
    <property type="entry name" value="RNase_HII"/>
</dbReference>
<dbReference type="InterPro" id="IPR001352">
    <property type="entry name" value="RNase_HII/HIII"/>
</dbReference>
<dbReference type="InterPro" id="IPR024567">
    <property type="entry name" value="RNase_HII/HIII_dom"/>
</dbReference>
<dbReference type="InterPro" id="IPR012337">
    <property type="entry name" value="RNaseH-like_sf"/>
</dbReference>
<dbReference type="InterPro" id="IPR036397">
    <property type="entry name" value="RNaseH_sf"/>
</dbReference>
<dbReference type="NCBIfam" id="NF000594">
    <property type="entry name" value="PRK00015.1-1"/>
    <property type="match status" value="1"/>
</dbReference>
<dbReference type="NCBIfam" id="NF000595">
    <property type="entry name" value="PRK00015.1-3"/>
    <property type="match status" value="1"/>
</dbReference>
<dbReference type="NCBIfam" id="NF000596">
    <property type="entry name" value="PRK00015.1-4"/>
    <property type="match status" value="1"/>
</dbReference>
<dbReference type="PANTHER" id="PTHR10954">
    <property type="entry name" value="RIBONUCLEASE H2 SUBUNIT A"/>
    <property type="match status" value="1"/>
</dbReference>
<dbReference type="PANTHER" id="PTHR10954:SF18">
    <property type="entry name" value="RIBONUCLEASE HII"/>
    <property type="match status" value="1"/>
</dbReference>
<dbReference type="Pfam" id="PF01351">
    <property type="entry name" value="RNase_HII"/>
    <property type="match status" value="1"/>
</dbReference>
<dbReference type="SUPFAM" id="SSF53098">
    <property type="entry name" value="Ribonuclease H-like"/>
    <property type="match status" value="1"/>
</dbReference>
<dbReference type="PROSITE" id="PS51975">
    <property type="entry name" value="RNASE_H_2"/>
    <property type="match status" value="1"/>
</dbReference>
<accession>Q32JS6</accession>
<reference key="1">
    <citation type="journal article" date="2005" name="Nucleic Acids Res.">
        <title>Genome dynamics and diversity of Shigella species, the etiologic agents of bacillary dysentery.</title>
        <authorList>
            <person name="Yang F."/>
            <person name="Yang J."/>
            <person name="Zhang X."/>
            <person name="Chen L."/>
            <person name="Jiang Y."/>
            <person name="Yan Y."/>
            <person name="Tang X."/>
            <person name="Wang J."/>
            <person name="Xiong Z."/>
            <person name="Dong J."/>
            <person name="Xue Y."/>
            <person name="Zhu Y."/>
            <person name="Xu X."/>
            <person name="Sun L."/>
            <person name="Chen S."/>
            <person name="Nie H."/>
            <person name="Peng J."/>
            <person name="Xu J."/>
            <person name="Wang Y."/>
            <person name="Yuan Z."/>
            <person name="Wen Y."/>
            <person name="Yao Z."/>
            <person name="Shen Y."/>
            <person name="Qiang B."/>
            <person name="Hou Y."/>
            <person name="Yu J."/>
            <person name="Jin Q."/>
        </authorList>
    </citation>
    <scope>NUCLEOTIDE SEQUENCE [LARGE SCALE GENOMIC DNA]</scope>
    <source>
        <strain>Sd197</strain>
    </source>
</reference>
<feature type="chain" id="PRO_0000235764" description="Ribonuclease HII">
    <location>
        <begin position="1"/>
        <end position="198"/>
    </location>
</feature>
<feature type="domain" description="RNase H type-2" evidence="2">
    <location>
        <begin position="10"/>
        <end position="198"/>
    </location>
</feature>
<feature type="binding site" evidence="1">
    <location>
        <position position="16"/>
    </location>
    <ligand>
        <name>a divalent metal cation</name>
        <dbReference type="ChEBI" id="CHEBI:60240"/>
    </ligand>
</feature>
<feature type="binding site" evidence="1">
    <location>
        <position position="17"/>
    </location>
    <ligand>
        <name>a divalent metal cation</name>
        <dbReference type="ChEBI" id="CHEBI:60240"/>
    </ligand>
</feature>
<feature type="binding site" evidence="1">
    <location>
        <position position="108"/>
    </location>
    <ligand>
        <name>a divalent metal cation</name>
        <dbReference type="ChEBI" id="CHEBI:60240"/>
    </ligand>
</feature>
<keyword id="KW-0963">Cytoplasm</keyword>
<keyword id="KW-0255">Endonuclease</keyword>
<keyword id="KW-0378">Hydrolase</keyword>
<keyword id="KW-0464">Manganese</keyword>
<keyword id="KW-0479">Metal-binding</keyword>
<keyword id="KW-0540">Nuclease</keyword>
<keyword id="KW-1185">Reference proteome</keyword>